<comment type="function">
    <text evidence="1">Involved in mitochondrial lipid homeostasis.</text>
</comment>
<comment type="subcellular location">
    <subcellularLocation>
        <location evidence="1">Mitochondrion inner membrane</location>
        <topology evidence="2">Single-pass membrane protein</topology>
    </subcellularLocation>
</comment>
<comment type="similarity">
    <text evidence="3">Belongs to the protein kinase superfamily. ADCK protein kinase family.</text>
</comment>
<keyword id="KW-0472">Membrane</keyword>
<keyword id="KW-0496">Mitochondrion</keyword>
<keyword id="KW-0999">Mitochondrion inner membrane</keyword>
<keyword id="KW-1185">Reference proteome</keyword>
<keyword id="KW-0809">Transit peptide</keyword>
<keyword id="KW-0812">Transmembrane</keyword>
<keyword id="KW-1133">Transmembrane helix</keyword>
<evidence type="ECO:0000250" key="1">
    <source>
        <dbReference type="UniProtKB" id="Q06567"/>
    </source>
</evidence>
<evidence type="ECO:0000255" key="2"/>
<evidence type="ECO:0000305" key="3"/>
<evidence type="ECO:0000312" key="4">
    <source>
        <dbReference type="PomBase" id="SPBC15C4.02"/>
    </source>
</evidence>
<sequence length="557" mass="64114">MFSRFSWPRITRCFRSYPKKKSSCISFTHHAREHTNFKKPAVVGASITLMASVALVDFDPVKHAGVSSKRAYRVVLAGFLCFSDYKKVLGSSYASEEERQLALSECHLRCAERSLKVFEENGGIYIKIGQHLSAMGYVIPKEWTNTMVKLQDRCPSTSLKDIDHLFRVDTGKGLDETFDEFDPIALGVASLAQVHKARLKDSDVWVAVKVQHPSVSLNSPLDLSMTRWVFKAIKTFFPDFKLMWLADEIERSLPQELDFTREAKNSIETKEHFAHLSTSLYVPEVMWSKPRILVMEYVAGARIDNLSFMDEHSISRDLVSVDICHIFNEMIFGKGGHLHCDPHGGNVLIRSKPKNSKSPRNYEIVLLDHGLYRDIPHELQVDYANMWLNIINFNEKNLKFYAKKVANVSDENFPIFATAITGRPYKSLKSLPIGGPNHEEEQKKFISALQKGGMLQSIIRLLSTMPRLTLLLMKTNDLVRSLDENLKTKSGPEKLYLIMARYCLRCVYDDKMDSLWNSRSFWVSKVFKGTYYRLSYLFSSLKYTLAENYFYYKHMYL</sequence>
<organism>
    <name type="scientific">Schizosaccharomyces pombe (strain 972 / ATCC 24843)</name>
    <name type="common">Fission yeast</name>
    <dbReference type="NCBI Taxonomy" id="284812"/>
    <lineage>
        <taxon>Eukaryota</taxon>
        <taxon>Fungi</taxon>
        <taxon>Dikarya</taxon>
        <taxon>Ascomycota</taxon>
        <taxon>Taphrinomycotina</taxon>
        <taxon>Schizosaccharomycetes</taxon>
        <taxon>Schizosaccharomycetales</taxon>
        <taxon>Schizosaccharomycetaceae</taxon>
        <taxon>Schizosaccharomyces</taxon>
    </lineage>
</organism>
<feature type="transit peptide" description="Mitochondrion" evidence="2">
    <location>
        <begin position="1"/>
        <end position="33"/>
    </location>
</feature>
<feature type="chain" id="PRO_0000310291" description="ABC1 family protein MCP2 homolog">
    <location>
        <begin position="34"/>
        <end position="557"/>
    </location>
</feature>
<feature type="topological domain" description="Mitochondrial matrix" evidence="1">
    <location>
        <begin position="34"/>
        <end position="39"/>
    </location>
</feature>
<feature type="transmembrane region" description="Helical" evidence="2">
    <location>
        <begin position="40"/>
        <end position="56"/>
    </location>
</feature>
<feature type="topological domain" description="Mitochondrial intermembrane" evidence="1">
    <location>
        <begin position="57"/>
        <end position="557"/>
    </location>
</feature>
<protein>
    <recommendedName>
        <fullName evidence="1">ABC1 family protein MCP2 homolog</fullName>
    </recommendedName>
</protein>
<accession>O60111</accession>
<reference key="1">
    <citation type="journal article" date="2002" name="Nature">
        <title>The genome sequence of Schizosaccharomyces pombe.</title>
        <authorList>
            <person name="Wood V."/>
            <person name="Gwilliam R."/>
            <person name="Rajandream M.A."/>
            <person name="Lyne M.H."/>
            <person name="Lyne R."/>
            <person name="Stewart A."/>
            <person name="Sgouros J.G."/>
            <person name="Peat N."/>
            <person name="Hayles J."/>
            <person name="Baker S.G."/>
            <person name="Basham D."/>
            <person name="Bowman S."/>
            <person name="Brooks K."/>
            <person name="Brown D."/>
            <person name="Brown S."/>
            <person name="Chillingworth T."/>
            <person name="Churcher C.M."/>
            <person name="Collins M."/>
            <person name="Connor R."/>
            <person name="Cronin A."/>
            <person name="Davis P."/>
            <person name="Feltwell T."/>
            <person name="Fraser A."/>
            <person name="Gentles S."/>
            <person name="Goble A."/>
            <person name="Hamlin N."/>
            <person name="Harris D.E."/>
            <person name="Hidalgo J."/>
            <person name="Hodgson G."/>
            <person name="Holroyd S."/>
            <person name="Hornsby T."/>
            <person name="Howarth S."/>
            <person name="Huckle E.J."/>
            <person name="Hunt S."/>
            <person name="Jagels K."/>
            <person name="James K.D."/>
            <person name="Jones L."/>
            <person name="Jones M."/>
            <person name="Leather S."/>
            <person name="McDonald S."/>
            <person name="McLean J."/>
            <person name="Mooney P."/>
            <person name="Moule S."/>
            <person name="Mungall K.L."/>
            <person name="Murphy L.D."/>
            <person name="Niblett D."/>
            <person name="Odell C."/>
            <person name="Oliver K."/>
            <person name="O'Neil S."/>
            <person name="Pearson D."/>
            <person name="Quail M.A."/>
            <person name="Rabbinowitsch E."/>
            <person name="Rutherford K.M."/>
            <person name="Rutter S."/>
            <person name="Saunders D."/>
            <person name="Seeger K."/>
            <person name="Sharp S."/>
            <person name="Skelton J."/>
            <person name="Simmonds M.N."/>
            <person name="Squares R."/>
            <person name="Squares S."/>
            <person name="Stevens K."/>
            <person name="Taylor K."/>
            <person name="Taylor R.G."/>
            <person name="Tivey A."/>
            <person name="Walsh S.V."/>
            <person name="Warren T."/>
            <person name="Whitehead S."/>
            <person name="Woodward J.R."/>
            <person name="Volckaert G."/>
            <person name="Aert R."/>
            <person name="Robben J."/>
            <person name="Grymonprez B."/>
            <person name="Weltjens I."/>
            <person name="Vanstreels E."/>
            <person name="Rieger M."/>
            <person name="Schaefer M."/>
            <person name="Mueller-Auer S."/>
            <person name="Gabel C."/>
            <person name="Fuchs M."/>
            <person name="Duesterhoeft A."/>
            <person name="Fritzc C."/>
            <person name="Holzer E."/>
            <person name="Moestl D."/>
            <person name="Hilbert H."/>
            <person name="Borzym K."/>
            <person name="Langer I."/>
            <person name="Beck A."/>
            <person name="Lehrach H."/>
            <person name="Reinhardt R."/>
            <person name="Pohl T.M."/>
            <person name="Eger P."/>
            <person name="Zimmermann W."/>
            <person name="Wedler H."/>
            <person name="Wambutt R."/>
            <person name="Purnelle B."/>
            <person name="Goffeau A."/>
            <person name="Cadieu E."/>
            <person name="Dreano S."/>
            <person name="Gloux S."/>
            <person name="Lelaure V."/>
            <person name="Mottier S."/>
            <person name="Galibert F."/>
            <person name="Aves S.J."/>
            <person name="Xiang Z."/>
            <person name="Hunt C."/>
            <person name="Moore K."/>
            <person name="Hurst S.M."/>
            <person name="Lucas M."/>
            <person name="Rochet M."/>
            <person name="Gaillardin C."/>
            <person name="Tallada V.A."/>
            <person name="Garzon A."/>
            <person name="Thode G."/>
            <person name="Daga R.R."/>
            <person name="Cruzado L."/>
            <person name="Jimenez J."/>
            <person name="Sanchez M."/>
            <person name="del Rey F."/>
            <person name="Benito J."/>
            <person name="Dominguez A."/>
            <person name="Revuelta J.L."/>
            <person name="Moreno S."/>
            <person name="Armstrong J."/>
            <person name="Forsburg S.L."/>
            <person name="Cerutti L."/>
            <person name="Lowe T."/>
            <person name="McCombie W.R."/>
            <person name="Paulsen I."/>
            <person name="Potashkin J."/>
            <person name="Shpakovski G.V."/>
            <person name="Ussery D."/>
            <person name="Barrell B.G."/>
            <person name="Nurse P."/>
        </authorList>
    </citation>
    <scope>NUCLEOTIDE SEQUENCE [LARGE SCALE GENOMIC DNA]</scope>
    <source>
        <strain>972 / ATCC 24843</strain>
    </source>
</reference>
<reference key="2">
    <citation type="journal article" date="2011" name="Science">
        <title>Comparative functional genomics of the fission yeasts.</title>
        <authorList>
            <person name="Rhind N."/>
            <person name="Chen Z."/>
            <person name="Yassour M."/>
            <person name="Thompson D.A."/>
            <person name="Haas B.J."/>
            <person name="Habib N."/>
            <person name="Wapinski I."/>
            <person name="Roy S."/>
            <person name="Lin M.F."/>
            <person name="Heiman D.I."/>
            <person name="Young S.K."/>
            <person name="Furuya K."/>
            <person name="Guo Y."/>
            <person name="Pidoux A."/>
            <person name="Chen H.M."/>
            <person name="Robbertse B."/>
            <person name="Goldberg J.M."/>
            <person name="Aoki K."/>
            <person name="Bayne E.H."/>
            <person name="Berlin A.M."/>
            <person name="Desjardins C.A."/>
            <person name="Dobbs E."/>
            <person name="Dukaj L."/>
            <person name="Fan L."/>
            <person name="FitzGerald M.G."/>
            <person name="French C."/>
            <person name="Gujja S."/>
            <person name="Hansen K."/>
            <person name="Keifenheim D."/>
            <person name="Levin J.Z."/>
            <person name="Mosher R.A."/>
            <person name="Mueller C.A."/>
            <person name="Pfiffner J."/>
            <person name="Priest M."/>
            <person name="Russ C."/>
            <person name="Smialowska A."/>
            <person name="Swoboda P."/>
            <person name="Sykes S.M."/>
            <person name="Vaughn M."/>
            <person name="Vengrova S."/>
            <person name="Yoder R."/>
            <person name="Zeng Q."/>
            <person name="Allshire R."/>
            <person name="Baulcombe D."/>
            <person name="Birren B.W."/>
            <person name="Brown W."/>
            <person name="Ekwall K."/>
            <person name="Kellis M."/>
            <person name="Leatherwood J."/>
            <person name="Levin H."/>
            <person name="Margalit H."/>
            <person name="Martienssen R."/>
            <person name="Nieduszynski C.A."/>
            <person name="Spatafora J.W."/>
            <person name="Friedman N."/>
            <person name="Dalgaard J.Z."/>
            <person name="Baumann P."/>
            <person name="Niki H."/>
            <person name="Regev A."/>
            <person name="Nusbaum C."/>
        </authorList>
    </citation>
    <scope>REVISION OF GENE MODEL</scope>
</reference>
<gene>
    <name evidence="4" type="ORF">SPBC15C4.02</name>
</gene>
<name>MCP2L_SCHPO</name>
<proteinExistence type="inferred from homology"/>
<dbReference type="EMBL" id="CU329671">
    <property type="protein sequence ID" value="CAA18893.2"/>
    <property type="molecule type" value="Genomic_DNA"/>
</dbReference>
<dbReference type="PIR" id="T39472">
    <property type="entry name" value="T39472"/>
</dbReference>
<dbReference type="SMR" id="O60111"/>
<dbReference type="FunCoup" id="O60111">
    <property type="interactions" value="194"/>
</dbReference>
<dbReference type="STRING" id="284812.O60111"/>
<dbReference type="iPTMnet" id="O60111"/>
<dbReference type="PaxDb" id="4896-SPBC15C4.02.1"/>
<dbReference type="EnsemblFungi" id="SPBC15C4.02.1">
    <property type="protein sequence ID" value="SPBC15C4.02.1:pep"/>
    <property type="gene ID" value="SPBC15C4.02"/>
</dbReference>
<dbReference type="KEGG" id="spo:2539608"/>
<dbReference type="PomBase" id="SPBC15C4.02"/>
<dbReference type="VEuPathDB" id="FungiDB:SPBC15C4.02"/>
<dbReference type="eggNOG" id="KOG1235">
    <property type="taxonomic scope" value="Eukaryota"/>
</dbReference>
<dbReference type="HOGENOM" id="CLU_006533_2_5_1"/>
<dbReference type="InParanoid" id="O60111"/>
<dbReference type="OMA" id="RCNPEDI"/>
<dbReference type="PRO" id="PR:O60111"/>
<dbReference type="Proteomes" id="UP000002485">
    <property type="component" value="Chromosome II"/>
</dbReference>
<dbReference type="GO" id="GO:0005743">
    <property type="term" value="C:mitochondrial inner membrane"/>
    <property type="evidence" value="ECO:0000318"/>
    <property type="project" value="GO_Central"/>
</dbReference>
<dbReference type="GO" id="GO:0016301">
    <property type="term" value="F:kinase activity"/>
    <property type="evidence" value="ECO:0000255"/>
    <property type="project" value="PomBase"/>
</dbReference>
<dbReference type="GO" id="GO:0055088">
    <property type="term" value="P:lipid homeostasis"/>
    <property type="evidence" value="ECO:0000318"/>
    <property type="project" value="GO_Central"/>
</dbReference>
<dbReference type="GO" id="GO:0007005">
    <property type="term" value="P:mitochondrion organization"/>
    <property type="evidence" value="ECO:0000318"/>
    <property type="project" value="GO_Central"/>
</dbReference>
<dbReference type="GO" id="GO:0055091">
    <property type="term" value="P:phospholipid homeostasis"/>
    <property type="evidence" value="ECO:0000266"/>
    <property type="project" value="PomBase"/>
</dbReference>
<dbReference type="CDD" id="cd13969">
    <property type="entry name" value="ADCK1-like"/>
    <property type="match status" value="1"/>
</dbReference>
<dbReference type="InterPro" id="IPR004147">
    <property type="entry name" value="ABC1_dom"/>
</dbReference>
<dbReference type="InterPro" id="IPR045307">
    <property type="entry name" value="ADCK1_dom"/>
</dbReference>
<dbReference type="InterPro" id="IPR011009">
    <property type="entry name" value="Kinase-like_dom_sf"/>
</dbReference>
<dbReference type="InterPro" id="IPR051130">
    <property type="entry name" value="Mito_struct-func_regulator"/>
</dbReference>
<dbReference type="PANTHER" id="PTHR43173:SF19">
    <property type="entry name" value="AARF DOMAIN-CONTAINING PROTEIN KINASE 1"/>
    <property type="match status" value="1"/>
</dbReference>
<dbReference type="PANTHER" id="PTHR43173">
    <property type="entry name" value="ABC1 FAMILY PROTEIN"/>
    <property type="match status" value="1"/>
</dbReference>
<dbReference type="Pfam" id="PF03109">
    <property type="entry name" value="ABC1"/>
    <property type="match status" value="1"/>
</dbReference>
<dbReference type="SUPFAM" id="SSF56112">
    <property type="entry name" value="Protein kinase-like (PK-like)"/>
    <property type="match status" value="1"/>
</dbReference>